<sequence>MNIGEAAKKSGLTPKMIRYYESIELLRPAGRSASGYRHYNENDLHTLAFIRRSRDLGFSLDEVGKLLTLWQDRQRASADVKALAAQHVRELNRKIEELSTLRDTLQDLVEHCQGDHRPDCPILKDLASGCCH</sequence>
<dbReference type="EMBL" id="AE004091">
    <property type="protein sequence ID" value="AAG08164.1"/>
    <property type="molecule type" value="Genomic_DNA"/>
</dbReference>
<dbReference type="PIR" id="H83048">
    <property type="entry name" value="H83048"/>
</dbReference>
<dbReference type="SMR" id="Q9HV30"/>
<dbReference type="FunCoup" id="Q9HV30">
    <property type="interactions" value="99"/>
</dbReference>
<dbReference type="STRING" id="208964.PA4778"/>
<dbReference type="PaxDb" id="208964-PA4778"/>
<dbReference type="DNASU" id="881842"/>
<dbReference type="KEGG" id="pae:PA4778"/>
<dbReference type="PATRIC" id="fig|208964.12.peg.5005"/>
<dbReference type="PseudoCAP" id="PA4778"/>
<dbReference type="HOGENOM" id="CLU_060077_2_0_6"/>
<dbReference type="InParanoid" id="Q9HV30"/>
<dbReference type="OrthoDB" id="9808480at2"/>
<dbReference type="PhylomeDB" id="Q9HV30"/>
<dbReference type="BioCyc" id="PAER208964:G1FZ6-4891-MONOMER"/>
<dbReference type="Proteomes" id="UP000002438">
    <property type="component" value="Chromosome"/>
</dbReference>
<dbReference type="CollecTF" id="EXPREG_00001590"/>
<dbReference type="GO" id="GO:0005737">
    <property type="term" value="C:cytoplasm"/>
    <property type="evidence" value="ECO:0007669"/>
    <property type="project" value="UniProtKB-SubCell"/>
</dbReference>
<dbReference type="GO" id="GO:0005507">
    <property type="term" value="F:copper ion binding"/>
    <property type="evidence" value="ECO:0007669"/>
    <property type="project" value="InterPro"/>
</dbReference>
<dbReference type="GO" id="GO:0003677">
    <property type="term" value="F:DNA binding"/>
    <property type="evidence" value="ECO:0007669"/>
    <property type="project" value="UniProtKB-KW"/>
</dbReference>
<dbReference type="GO" id="GO:0003700">
    <property type="term" value="F:DNA-binding transcription factor activity"/>
    <property type="evidence" value="ECO:0000318"/>
    <property type="project" value="GO_Central"/>
</dbReference>
<dbReference type="GO" id="GO:0045893">
    <property type="term" value="P:positive regulation of DNA-templated transcription"/>
    <property type="evidence" value="ECO:0000315"/>
    <property type="project" value="PseudoCAP"/>
</dbReference>
<dbReference type="CDD" id="cd01108">
    <property type="entry name" value="HTH_CueR"/>
    <property type="match status" value="1"/>
</dbReference>
<dbReference type="Gene3D" id="1.10.1660.10">
    <property type="match status" value="1"/>
</dbReference>
<dbReference type="InterPro" id="IPR011789">
    <property type="entry name" value="CueR"/>
</dbReference>
<dbReference type="InterPro" id="IPR009061">
    <property type="entry name" value="DNA-bd_dom_put_sf"/>
</dbReference>
<dbReference type="InterPro" id="IPR000551">
    <property type="entry name" value="MerR-type_HTH_dom"/>
</dbReference>
<dbReference type="InterPro" id="IPR047057">
    <property type="entry name" value="MerR_fam"/>
</dbReference>
<dbReference type="InterPro" id="IPR015358">
    <property type="entry name" value="Tscrpt_reg_MerR_DNA-bd"/>
</dbReference>
<dbReference type="NCBIfam" id="TIGR02044">
    <property type="entry name" value="CueR"/>
    <property type="match status" value="1"/>
</dbReference>
<dbReference type="PANTHER" id="PTHR30204:SF94">
    <property type="entry name" value="HEAVY METAL-DEPENDENT TRANSCRIPTIONAL REGULATOR HI_0293-RELATED"/>
    <property type="match status" value="1"/>
</dbReference>
<dbReference type="PANTHER" id="PTHR30204">
    <property type="entry name" value="REDOX-CYCLING DRUG-SENSING TRANSCRIPTIONAL ACTIVATOR SOXR"/>
    <property type="match status" value="1"/>
</dbReference>
<dbReference type="Pfam" id="PF00376">
    <property type="entry name" value="MerR"/>
    <property type="match status" value="1"/>
</dbReference>
<dbReference type="Pfam" id="PF09278">
    <property type="entry name" value="MerR-DNA-bind"/>
    <property type="match status" value="1"/>
</dbReference>
<dbReference type="PRINTS" id="PR00040">
    <property type="entry name" value="HTHMERR"/>
</dbReference>
<dbReference type="SMART" id="SM00422">
    <property type="entry name" value="HTH_MERR"/>
    <property type="match status" value="1"/>
</dbReference>
<dbReference type="SUPFAM" id="SSF46955">
    <property type="entry name" value="Putative DNA-binding domain"/>
    <property type="match status" value="1"/>
</dbReference>
<dbReference type="PROSITE" id="PS50937">
    <property type="entry name" value="HTH_MERR_2"/>
    <property type="match status" value="1"/>
</dbReference>
<comment type="subcellular location">
    <subcellularLocation>
        <location evidence="3">Cytoplasm</location>
    </subcellularLocation>
</comment>
<comment type="domain">
    <text evidence="1">It contains a N-terminal DNA binding region and a C-terminal metal binding region.</text>
</comment>
<feature type="chain" id="PRO_0000098172" description="Uncharacterized HTH-type transcriptional regulator PA4778">
    <location>
        <begin position="1"/>
        <end position="132"/>
    </location>
</feature>
<feature type="domain" description="HTH merR-type" evidence="2">
    <location>
        <begin position="1"/>
        <end position="69"/>
    </location>
</feature>
<feature type="DNA-binding region" description="H-T-H motif" evidence="2">
    <location>
        <begin position="4"/>
        <end position="23"/>
    </location>
</feature>
<protein>
    <recommendedName>
        <fullName>Uncharacterized HTH-type transcriptional regulator PA4778</fullName>
    </recommendedName>
</protein>
<evidence type="ECO:0000250" key="1"/>
<evidence type="ECO:0000255" key="2">
    <source>
        <dbReference type="PROSITE-ProRule" id="PRU00254"/>
    </source>
</evidence>
<evidence type="ECO:0000305" key="3"/>
<name>Y4778_PSEAE</name>
<organism>
    <name type="scientific">Pseudomonas aeruginosa (strain ATCC 15692 / DSM 22644 / CIP 104116 / JCM 14847 / LMG 12228 / 1C / PRS 101 / PAO1)</name>
    <dbReference type="NCBI Taxonomy" id="208964"/>
    <lineage>
        <taxon>Bacteria</taxon>
        <taxon>Pseudomonadati</taxon>
        <taxon>Pseudomonadota</taxon>
        <taxon>Gammaproteobacteria</taxon>
        <taxon>Pseudomonadales</taxon>
        <taxon>Pseudomonadaceae</taxon>
        <taxon>Pseudomonas</taxon>
    </lineage>
</organism>
<accession>Q9HV30</accession>
<reference key="1">
    <citation type="journal article" date="2000" name="Nature">
        <title>Complete genome sequence of Pseudomonas aeruginosa PAO1, an opportunistic pathogen.</title>
        <authorList>
            <person name="Stover C.K."/>
            <person name="Pham X.-Q.T."/>
            <person name="Erwin A.L."/>
            <person name="Mizoguchi S.D."/>
            <person name="Warrener P."/>
            <person name="Hickey M.J."/>
            <person name="Brinkman F.S.L."/>
            <person name="Hufnagle W.O."/>
            <person name="Kowalik D.J."/>
            <person name="Lagrou M."/>
            <person name="Garber R.L."/>
            <person name="Goltry L."/>
            <person name="Tolentino E."/>
            <person name="Westbrock-Wadman S."/>
            <person name="Yuan Y."/>
            <person name="Brody L.L."/>
            <person name="Coulter S.N."/>
            <person name="Folger K.R."/>
            <person name="Kas A."/>
            <person name="Larbig K."/>
            <person name="Lim R.M."/>
            <person name="Smith K.A."/>
            <person name="Spencer D.H."/>
            <person name="Wong G.K.-S."/>
            <person name="Wu Z."/>
            <person name="Paulsen I.T."/>
            <person name="Reizer J."/>
            <person name="Saier M.H. Jr."/>
            <person name="Hancock R.E.W."/>
            <person name="Lory S."/>
            <person name="Olson M.V."/>
        </authorList>
    </citation>
    <scope>NUCLEOTIDE SEQUENCE [LARGE SCALE GENOMIC DNA]</scope>
    <source>
        <strain>ATCC 15692 / DSM 22644 / CIP 104116 / JCM 14847 / LMG 12228 / 1C / PRS 101 / PAO1</strain>
    </source>
</reference>
<gene>
    <name type="ordered locus">PA4778</name>
</gene>
<proteinExistence type="inferred from homology"/>
<keyword id="KW-0963">Cytoplasm</keyword>
<keyword id="KW-0238">DNA-binding</keyword>
<keyword id="KW-1185">Reference proteome</keyword>
<keyword id="KW-0804">Transcription</keyword>
<keyword id="KW-0805">Transcription regulation</keyword>